<gene>
    <name evidence="1" type="primary">pqqA</name>
    <name type="ordered locus">PSPPH_4704</name>
</gene>
<accession>Q48CT7</accession>
<proteinExistence type="inferred from homology"/>
<sequence length="24" mass="2871">MSWTKPAYTDLRIGFEVTMYFASR</sequence>
<keyword id="KW-0884">PQQ biosynthesis</keyword>
<protein>
    <recommendedName>
        <fullName evidence="1">Coenzyme PQQ synthesis protein A</fullName>
    </recommendedName>
    <alternativeName>
        <fullName evidence="1">Pyrroloquinoline quinone biosynthesis protein A</fullName>
    </alternativeName>
</protein>
<organism>
    <name type="scientific">Pseudomonas savastanoi pv. phaseolicola (strain 1448A / Race 6)</name>
    <name type="common">Pseudomonas syringae pv. phaseolicola (strain 1448A / Race 6)</name>
    <dbReference type="NCBI Taxonomy" id="264730"/>
    <lineage>
        <taxon>Bacteria</taxon>
        <taxon>Pseudomonadati</taxon>
        <taxon>Pseudomonadota</taxon>
        <taxon>Gammaproteobacteria</taxon>
        <taxon>Pseudomonadales</taxon>
        <taxon>Pseudomonadaceae</taxon>
        <taxon>Pseudomonas</taxon>
    </lineage>
</organism>
<comment type="function">
    <text evidence="1">Required for coenzyme pyrroloquinoline quinone (PQQ) biosynthesis. PQQ is probably formed by cross-linking a specific glutamate to a specific tyrosine residue and excising these residues from the peptide.</text>
</comment>
<comment type="pathway">
    <text evidence="1">Cofactor biosynthesis; pyrroloquinoline quinone biosynthesis.</text>
</comment>
<comment type="similarity">
    <text evidence="1">Belongs to the PqqA family.</text>
</comment>
<name>PQQA_PSE14</name>
<dbReference type="EMBL" id="CP000058">
    <property type="protein sequence ID" value="AAZ35173.1"/>
    <property type="molecule type" value="Genomic_DNA"/>
</dbReference>
<dbReference type="RefSeq" id="WP_003422658.1">
    <property type="nucleotide sequence ID" value="NC_005773.3"/>
</dbReference>
<dbReference type="GeneID" id="97252069"/>
<dbReference type="KEGG" id="psp:PSPPH_4704"/>
<dbReference type="eggNOG" id="ENOG5031JH1">
    <property type="taxonomic scope" value="Bacteria"/>
</dbReference>
<dbReference type="HOGENOM" id="CLU_219131_0_0_6"/>
<dbReference type="UniPathway" id="UPA00539"/>
<dbReference type="Proteomes" id="UP000000551">
    <property type="component" value="Chromosome"/>
</dbReference>
<dbReference type="GO" id="GO:0018189">
    <property type="term" value="P:pyrroloquinoline quinone biosynthetic process"/>
    <property type="evidence" value="ECO:0007669"/>
    <property type="project" value="UniProtKB-UniRule"/>
</dbReference>
<dbReference type="HAMAP" id="MF_00656">
    <property type="entry name" value="PQQ_syn_PqqA"/>
    <property type="match status" value="1"/>
</dbReference>
<dbReference type="InterPro" id="IPR011725">
    <property type="entry name" value="PQQ_synth_PqqA"/>
</dbReference>
<dbReference type="NCBIfam" id="TIGR02107">
    <property type="entry name" value="PQQ_syn_pqqA"/>
    <property type="match status" value="1"/>
</dbReference>
<dbReference type="Pfam" id="PF08042">
    <property type="entry name" value="PqqA"/>
    <property type="match status" value="1"/>
</dbReference>
<evidence type="ECO:0000255" key="1">
    <source>
        <dbReference type="HAMAP-Rule" id="MF_00656"/>
    </source>
</evidence>
<feature type="chain" id="PRO_1000061697" description="Coenzyme PQQ synthesis protein A">
    <location>
        <begin position="1"/>
        <end position="24"/>
    </location>
</feature>
<feature type="cross-link" description="Pyrroloquinoline quinone (Glu-Tyr)" evidence="1">
    <location>
        <begin position="16"/>
        <end position="20"/>
    </location>
</feature>
<reference key="1">
    <citation type="journal article" date="2005" name="J. Bacteriol.">
        <title>Whole-genome sequence analysis of Pseudomonas syringae pv. phaseolicola 1448A reveals divergence among pathovars in genes involved in virulence and transposition.</title>
        <authorList>
            <person name="Joardar V."/>
            <person name="Lindeberg M."/>
            <person name="Jackson R.W."/>
            <person name="Selengut J."/>
            <person name="Dodson R."/>
            <person name="Brinkac L.M."/>
            <person name="Daugherty S.C."/>
            <person name="DeBoy R.T."/>
            <person name="Durkin A.S."/>
            <person name="Gwinn Giglio M."/>
            <person name="Madupu R."/>
            <person name="Nelson W.C."/>
            <person name="Rosovitz M.J."/>
            <person name="Sullivan S.A."/>
            <person name="Crabtree J."/>
            <person name="Creasy T."/>
            <person name="Davidsen T.M."/>
            <person name="Haft D.H."/>
            <person name="Zafar N."/>
            <person name="Zhou L."/>
            <person name="Halpin R."/>
            <person name="Holley T."/>
            <person name="Khouri H.M."/>
            <person name="Feldblyum T.V."/>
            <person name="White O."/>
            <person name="Fraser C.M."/>
            <person name="Chatterjee A.K."/>
            <person name="Cartinhour S."/>
            <person name="Schneider D."/>
            <person name="Mansfield J.W."/>
            <person name="Collmer A."/>
            <person name="Buell R."/>
        </authorList>
    </citation>
    <scope>NUCLEOTIDE SEQUENCE [LARGE SCALE GENOMIC DNA]</scope>
    <source>
        <strain>1448A / Race 6</strain>
    </source>
</reference>